<comment type="function">
    <text evidence="1 2">Regulates centrosome duplication, probably by inhibiting the kinase activity of ROCK2. Proposed to act as co-chaperone for HSP90. May play a role in the regulation of NOD1 via a HSP90 chaperone complex. In vitro, has intrinsic chaperone activity. This function may be achieved by inhibiting association of ROCK2 with NPM1. Plays a role in ensuring the localization of the tyrosine kinase receptor EGFR to the plasma membrane, and thus ensures the subsequent regulation of EGFR activity and EGF-induced actin cytoskeleton remodeling (By similarity). Involved in stress response. Prevents tumorigenesis (By similarity).</text>
</comment>
<comment type="subunit">
    <text evidence="1">Interacts with HSP90AA1, HSP90AB1, PPP5C, ROCK1 and ROCK2.</text>
</comment>
<protein>
    <recommendedName>
        <fullName>Cysteine and histidine-rich domain-containing protein 1</fullName>
    </recommendedName>
    <alternativeName>
        <fullName>CHORD domain-containing protein 1</fullName>
        <shortName>CHP-1</shortName>
    </alternativeName>
    <alternativeName>
        <fullName>Morgana</fullName>
    </alternativeName>
</protein>
<name>CHRD1_RAT</name>
<organism>
    <name type="scientific">Rattus norvegicus</name>
    <name type="common">Rat</name>
    <dbReference type="NCBI Taxonomy" id="10116"/>
    <lineage>
        <taxon>Eukaryota</taxon>
        <taxon>Metazoa</taxon>
        <taxon>Chordata</taxon>
        <taxon>Craniata</taxon>
        <taxon>Vertebrata</taxon>
        <taxon>Euteleostomi</taxon>
        <taxon>Mammalia</taxon>
        <taxon>Eutheria</taxon>
        <taxon>Euarchontoglires</taxon>
        <taxon>Glires</taxon>
        <taxon>Rodentia</taxon>
        <taxon>Myomorpha</taxon>
        <taxon>Muroidea</taxon>
        <taxon>Muridae</taxon>
        <taxon>Murinae</taxon>
        <taxon>Rattus</taxon>
    </lineage>
</organism>
<proteinExistence type="inferred from homology"/>
<feature type="initiator methionine" description="Removed" evidence="2">
    <location>
        <position position="1"/>
    </location>
</feature>
<feature type="chain" id="PRO_0000402802" description="Cysteine and histidine-rich domain-containing protein 1">
    <location>
        <begin position="2"/>
        <end position="331"/>
    </location>
</feature>
<feature type="domain" description="CHORD 1" evidence="4">
    <location>
        <begin position="5"/>
        <end position="64"/>
    </location>
</feature>
<feature type="domain" description="CHORD 2" evidence="4">
    <location>
        <begin position="157"/>
        <end position="216"/>
    </location>
</feature>
<feature type="domain" description="CS" evidence="3">
    <location>
        <begin position="227"/>
        <end position="316"/>
    </location>
</feature>
<feature type="region of interest" description="Interaction with PPP5C" evidence="1">
    <location>
        <begin position="2"/>
        <end position="77"/>
    </location>
</feature>
<feature type="region of interest" description="Disordered" evidence="5">
    <location>
        <begin position="62"/>
        <end position="82"/>
    </location>
</feature>
<feature type="region of interest" description="Interaction with HSP90AA1 and HSP90AB1" evidence="1">
    <location>
        <begin position="65"/>
        <end position="316"/>
    </location>
</feature>
<feature type="compositionally biased region" description="Basic and acidic residues" evidence="5">
    <location>
        <begin position="64"/>
        <end position="82"/>
    </location>
</feature>
<feature type="binding site" evidence="4">
    <location>
        <position position="5"/>
    </location>
    <ligand>
        <name>Zn(2+)</name>
        <dbReference type="ChEBI" id="CHEBI:29105"/>
        <label>1</label>
    </ligand>
</feature>
<feature type="binding site" evidence="4">
    <location>
        <position position="10"/>
    </location>
    <ligand>
        <name>Zn(2+)</name>
        <dbReference type="ChEBI" id="CHEBI:29105"/>
        <label>1</label>
    </ligand>
</feature>
<feature type="binding site" evidence="4">
    <location>
        <position position="24"/>
    </location>
    <ligand>
        <name>Zn(2+)</name>
        <dbReference type="ChEBI" id="CHEBI:29105"/>
        <label>1</label>
    </ligand>
</feature>
<feature type="binding site" evidence="4">
    <location>
        <position position="27"/>
    </location>
    <ligand>
        <name>Zn(2+)</name>
        <dbReference type="ChEBI" id="CHEBI:29105"/>
        <label>2</label>
    </ligand>
</feature>
<feature type="binding site" evidence="4">
    <location>
        <position position="42"/>
    </location>
    <ligand>
        <name>Zn(2+)</name>
        <dbReference type="ChEBI" id="CHEBI:29105"/>
        <label>2</label>
    </ligand>
</feature>
<feature type="binding site" evidence="4">
    <location>
        <position position="43"/>
    </location>
    <ligand>
        <name>Zn(2+)</name>
        <dbReference type="ChEBI" id="CHEBI:29105"/>
        <label>2</label>
    </ligand>
</feature>
<feature type="binding site" evidence="4">
    <location>
        <position position="59"/>
    </location>
    <ligand>
        <name>Zn(2+)</name>
        <dbReference type="ChEBI" id="CHEBI:29105"/>
        <label>2</label>
    </ligand>
</feature>
<feature type="binding site" evidence="4">
    <location>
        <position position="64"/>
    </location>
    <ligand>
        <name>Zn(2+)</name>
        <dbReference type="ChEBI" id="CHEBI:29105"/>
        <label>1</label>
    </ligand>
</feature>
<feature type="binding site" evidence="4">
    <location>
        <position position="157"/>
    </location>
    <ligand>
        <name>Zn(2+)</name>
        <dbReference type="ChEBI" id="CHEBI:29105"/>
        <label>3</label>
    </ligand>
</feature>
<feature type="binding site" evidence="4">
    <location>
        <position position="162"/>
    </location>
    <ligand>
        <name>Zn(2+)</name>
        <dbReference type="ChEBI" id="CHEBI:29105"/>
        <label>3</label>
    </ligand>
</feature>
<feature type="binding site" evidence="4">
    <location>
        <position position="176"/>
    </location>
    <ligand>
        <name>Zn(2+)</name>
        <dbReference type="ChEBI" id="CHEBI:29105"/>
        <label>3</label>
    </ligand>
</feature>
<feature type="binding site" evidence="4">
    <location>
        <position position="179"/>
    </location>
    <ligand>
        <name>Zn(2+)</name>
        <dbReference type="ChEBI" id="CHEBI:29105"/>
        <label>4</label>
    </ligand>
</feature>
<feature type="binding site" evidence="4">
    <location>
        <position position="194"/>
    </location>
    <ligand>
        <name>Zn(2+)</name>
        <dbReference type="ChEBI" id="CHEBI:29105"/>
        <label>4</label>
    </ligand>
</feature>
<feature type="binding site" evidence="4">
    <location>
        <position position="195"/>
    </location>
    <ligand>
        <name>Zn(2+)</name>
        <dbReference type="ChEBI" id="CHEBI:29105"/>
        <label>4</label>
    </ligand>
</feature>
<feature type="binding site" evidence="4">
    <location>
        <position position="211"/>
    </location>
    <ligand>
        <name>Zn(2+)</name>
        <dbReference type="ChEBI" id="CHEBI:29105"/>
        <label>4</label>
    </ligand>
</feature>
<feature type="binding site" evidence="4">
    <location>
        <position position="216"/>
    </location>
    <ligand>
        <name>Zn(2+)</name>
        <dbReference type="ChEBI" id="CHEBI:29105"/>
        <label>3</label>
    </ligand>
</feature>
<feature type="modified residue" description="N-acetylalanine" evidence="2">
    <location>
        <position position="2"/>
    </location>
</feature>
<feature type="modified residue" description="Phosphothreonine" evidence="2">
    <location>
        <position position="47"/>
    </location>
</feature>
<feature type="modified residue" description="Phosphoserine" evidence="2">
    <location>
        <position position="51"/>
    </location>
</feature>
<evidence type="ECO:0000250" key="1"/>
<evidence type="ECO:0000250" key="2">
    <source>
        <dbReference type="UniProtKB" id="Q9UHD1"/>
    </source>
</evidence>
<evidence type="ECO:0000255" key="3">
    <source>
        <dbReference type="PROSITE-ProRule" id="PRU00547"/>
    </source>
</evidence>
<evidence type="ECO:0000255" key="4">
    <source>
        <dbReference type="PROSITE-ProRule" id="PRU00734"/>
    </source>
</evidence>
<evidence type="ECO:0000256" key="5">
    <source>
        <dbReference type="SAM" id="MobiDB-lite"/>
    </source>
</evidence>
<accession>D4A4T9</accession>
<keyword id="KW-0007">Acetylation</keyword>
<keyword id="KW-0143">Chaperone</keyword>
<keyword id="KW-0479">Metal-binding</keyword>
<keyword id="KW-0597">Phosphoprotein</keyword>
<keyword id="KW-1185">Reference proteome</keyword>
<keyword id="KW-0677">Repeat</keyword>
<keyword id="KW-0346">Stress response</keyword>
<keyword id="KW-0862">Zinc</keyword>
<reference key="1">
    <citation type="submission" date="2005-09" db="EMBL/GenBank/DDBJ databases">
        <authorList>
            <person name="Mural R.J."/>
            <person name="Adams M.D."/>
            <person name="Myers E.W."/>
            <person name="Smith H.O."/>
            <person name="Venter J.C."/>
        </authorList>
    </citation>
    <scope>NUCLEOTIDE SEQUENCE [LARGE SCALE GENOMIC DNA]</scope>
    <source>
        <strain>Brown Norway</strain>
    </source>
</reference>
<sequence>MALLCYNRGCGQRFDPEANADDACTYHPGVPVFHDALKGWSCCKRRTTDFSDFLSIVGCTKGRHNSEKPPEPVKPEVKTTEKKELSELKPKFQEHIIQAPKPVEAIKRPSPDEPMTNLELKISASLKQALDKLKLSSGNEEDKKEEDSDEIKIGTSCKNGGCSKTYQGLQSLEEVCVYHSGVPIFHEGMKYWSCCRRKTSDFNTFLAQEGCTRGKHVWTKKDAGKKVVPCRHDWHQTGGEVTISVYAKNSLPELSQVEANSTLLNVHIVFEGEKEFHQNVKLWGVIDVKRSYVTMTATKIEITMRKAEPMQWASLELPTTKKQEKQKDIAD</sequence>
<dbReference type="EMBL" id="CH473993">
    <property type="protein sequence ID" value="EDL78419.1"/>
    <property type="molecule type" value="Genomic_DNA"/>
</dbReference>
<dbReference type="RefSeq" id="NP_001101598.1">
    <property type="nucleotide sequence ID" value="NM_001108128.1"/>
</dbReference>
<dbReference type="SMR" id="D4A4T9"/>
<dbReference type="FunCoup" id="D4A4T9">
    <property type="interactions" value="3302"/>
</dbReference>
<dbReference type="STRING" id="10116.ENSRNOP00000030171"/>
<dbReference type="iPTMnet" id="D4A4T9"/>
<dbReference type="PhosphoSitePlus" id="D4A4T9"/>
<dbReference type="jPOST" id="D4A4T9"/>
<dbReference type="PaxDb" id="10116-ENSRNOP00000030171"/>
<dbReference type="PeptideAtlas" id="D4A4T9"/>
<dbReference type="GeneID" id="315447"/>
<dbReference type="KEGG" id="rno:315447"/>
<dbReference type="UCSC" id="RGD:1304679">
    <property type="organism name" value="rat"/>
</dbReference>
<dbReference type="AGR" id="RGD:1304679"/>
<dbReference type="CTD" id="26973"/>
<dbReference type="RGD" id="1304679">
    <property type="gene designation" value="Chordc1"/>
</dbReference>
<dbReference type="VEuPathDB" id="HostDB:ENSRNOG00000026643"/>
<dbReference type="eggNOG" id="KOG1667">
    <property type="taxonomic scope" value="Eukaryota"/>
</dbReference>
<dbReference type="HOGENOM" id="CLU_040079_0_0_1"/>
<dbReference type="InParanoid" id="D4A4T9"/>
<dbReference type="OrthoDB" id="48047at9989"/>
<dbReference type="PhylomeDB" id="D4A4T9"/>
<dbReference type="TreeFam" id="TF105394"/>
<dbReference type="PRO" id="PR:D4A4T9"/>
<dbReference type="Proteomes" id="UP000002494">
    <property type="component" value="Chromosome 8"/>
</dbReference>
<dbReference type="Proteomes" id="UP000234681">
    <property type="component" value="Chromosome 8"/>
</dbReference>
<dbReference type="Bgee" id="ENSRNOG00000026643">
    <property type="expression patterns" value="Expressed in quadriceps femoris and 20 other cell types or tissues"/>
</dbReference>
<dbReference type="GO" id="GO:0043531">
    <property type="term" value="F:ADP binding"/>
    <property type="evidence" value="ECO:0000266"/>
    <property type="project" value="RGD"/>
</dbReference>
<dbReference type="GO" id="GO:0005524">
    <property type="term" value="F:ATP binding"/>
    <property type="evidence" value="ECO:0000266"/>
    <property type="project" value="RGD"/>
</dbReference>
<dbReference type="GO" id="GO:0051879">
    <property type="term" value="F:Hsp90 protein binding"/>
    <property type="evidence" value="ECO:0000266"/>
    <property type="project" value="RGD"/>
</dbReference>
<dbReference type="GO" id="GO:0008270">
    <property type="term" value="F:zinc ion binding"/>
    <property type="evidence" value="ECO:0000266"/>
    <property type="project" value="RGD"/>
</dbReference>
<dbReference type="GO" id="GO:0051298">
    <property type="term" value="P:centrosome duplication"/>
    <property type="evidence" value="ECO:0000318"/>
    <property type="project" value="GO_Central"/>
</dbReference>
<dbReference type="GO" id="GO:0061077">
    <property type="term" value="P:chaperone-mediated protein folding"/>
    <property type="evidence" value="ECO:0000250"/>
    <property type="project" value="UniProtKB"/>
</dbReference>
<dbReference type="GO" id="GO:1900034">
    <property type="term" value="P:regulation of cellular response to heat"/>
    <property type="evidence" value="ECO:0000250"/>
    <property type="project" value="UniProtKB"/>
</dbReference>
<dbReference type="GO" id="GO:0010824">
    <property type="term" value="P:regulation of centrosome duplication"/>
    <property type="evidence" value="ECO:0000250"/>
    <property type="project" value="UniProtKB"/>
</dbReference>
<dbReference type="CDD" id="cd06488">
    <property type="entry name" value="p23_melusin_like"/>
    <property type="match status" value="1"/>
</dbReference>
<dbReference type="FunFam" id="2.60.40.790:FF:000017">
    <property type="entry name" value="Cysteine and histidine-rich domain-containing protein 1"/>
    <property type="match status" value="1"/>
</dbReference>
<dbReference type="FunFam" id="4.10.1130.20:FF:000001">
    <property type="entry name" value="Cysteine and histidine-rich domain-containing protein 1"/>
    <property type="match status" value="1"/>
</dbReference>
<dbReference type="FunFam" id="4.10.1130.20:FF:000002">
    <property type="entry name" value="cysteine and histidine-rich domain-containing protein 1"/>
    <property type="match status" value="1"/>
</dbReference>
<dbReference type="Gene3D" id="2.60.40.790">
    <property type="match status" value="1"/>
</dbReference>
<dbReference type="Gene3D" id="4.10.1130.20">
    <property type="match status" value="2"/>
</dbReference>
<dbReference type="InterPro" id="IPR007051">
    <property type="entry name" value="CHORD_dom"/>
</dbReference>
<dbReference type="InterPro" id="IPR039790">
    <property type="entry name" value="CHRD1"/>
</dbReference>
<dbReference type="InterPro" id="IPR007052">
    <property type="entry name" value="CS_dom"/>
</dbReference>
<dbReference type="InterPro" id="IPR008978">
    <property type="entry name" value="HSP20-like_chaperone"/>
</dbReference>
<dbReference type="PANTHER" id="PTHR46983">
    <property type="entry name" value="CYSTEINE AND HISTIDINE-RICH DOMAIN-CONTAINING PROTEIN 1"/>
    <property type="match status" value="1"/>
</dbReference>
<dbReference type="PANTHER" id="PTHR46983:SF4">
    <property type="entry name" value="CYSTEINE AND HISTIDINE-RICH DOMAIN-CONTAINING PROTEIN 1"/>
    <property type="match status" value="1"/>
</dbReference>
<dbReference type="Pfam" id="PF04968">
    <property type="entry name" value="CHORD"/>
    <property type="match status" value="2"/>
</dbReference>
<dbReference type="Pfam" id="PF04969">
    <property type="entry name" value="CS"/>
    <property type="match status" value="1"/>
</dbReference>
<dbReference type="SUPFAM" id="SSF49764">
    <property type="entry name" value="HSP20-like chaperones"/>
    <property type="match status" value="1"/>
</dbReference>
<dbReference type="PROSITE" id="PS51401">
    <property type="entry name" value="CHORD"/>
    <property type="match status" value="2"/>
</dbReference>
<dbReference type="PROSITE" id="PS51203">
    <property type="entry name" value="CS"/>
    <property type="match status" value="1"/>
</dbReference>
<gene>
    <name type="primary">Chordc1</name>
</gene>